<name>VAPC5_MYCTU</name>
<evidence type="ECO:0000255" key="1">
    <source>
        <dbReference type="HAMAP-Rule" id="MF_00265"/>
    </source>
</evidence>
<evidence type="ECO:0000269" key="2">
    <source>
    </source>
</evidence>
<evidence type="ECO:0000269" key="3">
    <source>
    </source>
</evidence>
<evidence type="ECO:0007829" key="4">
    <source>
        <dbReference type="PDB" id="3DBO"/>
    </source>
</evidence>
<keyword id="KW-0002">3D-structure</keyword>
<keyword id="KW-0378">Hydrolase</keyword>
<keyword id="KW-0460">Magnesium</keyword>
<keyword id="KW-0479">Metal-binding</keyword>
<keyword id="KW-0540">Nuclease</keyword>
<keyword id="KW-1185">Reference proteome</keyword>
<keyword id="KW-0964">Secreted</keyword>
<keyword id="KW-1277">Toxin-antitoxin system</keyword>
<comment type="function">
    <text evidence="2">Probable toxic component of a type II toxin-antitoxin (TA) system. The cognate antitoxin is VapB5. Has limited RNase activity on substrates; activity is seen with a VapC5-VapB5 complex.</text>
</comment>
<comment type="cofactor">
    <cofactor evidence="1 2">
        <name>Mg(2+)</name>
        <dbReference type="ChEBI" id="CHEBI:18420"/>
    </cofactor>
</comment>
<comment type="subunit">
    <text evidence="2">Forms a complex with VapB5.</text>
</comment>
<comment type="subcellular location">
    <subcellularLocation>
        <location>Secreted</location>
    </subcellularLocation>
    <text evidence="3">Following 6 weeks of nutrient starvation.</text>
</comment>
<comment type="miscellaneous">
    <text>Was identified as a high-confidence drug target.</text>
</comment>
<comment type="similarity">
    <text evidence="1">Belongs to the PINc/VapC protein family.</text>
</comment>
<protein>
    <recommendedName>
        <fullName evidence="1">Ribonuclease VapC5</fullName>
        <shortName evidence="1">RNase VapC5</shortName>
        <ecNumber evidence="1">3.1.-.-</ecNumber>
    </recommendedName>
    <alternativeName>
        <fullName evidence="1">Toxin VapC5</fullName>
    </alternativeName>
</protein>
<reference key="1">
    <citation type="journal article" date="1998" name="Nature">
        <title>Deciphering the biology of Mycobacterium tuberculosis from the complete genome sequence.</title>
        <authorList>
            <person name="Cole S.T."/>
            <person name="Brosch R."/>
            <person name="Parkhill J."/>
            <person name="Garnier T."/>
            <person name="Churcher C.M."/>
            <person name="Harris D.E."/>
            <person name="Gordon S.V."/>
            <person name="Eiglmeier K."/>
            <person name="Gas S."/>
            <person name="Barry C.E. III"/>
            <person name="Tekaia F."/>
            <person name="Badcock K."/>
            <person name="Basham D."/>
            <person name="Brown D."/>
            <person name="Chillingworth T."/>
            <person name="Connor R."/>
            <person name="Davies R.M."/>
            <person name="Devlin K."/>
            <person name="Feltwell T."/>
            <person name="Gentles S."/>
            <person name="Hamlin N."/>
            <person name="Holroyd S."/>
            <person name="Hornsby T."/>
            <person name="Jagels K."/>
            <person name="Krogh A."/>
            <person name="McLean J."/>
            <person name="Moule S."/>
            <person name="Murphy L.D."/>
            <person name="Oliver S."/>
            <person name="Osborne J."/>
            <person name="Quail M.A."/>
            <person name="Rajandream M.A."/>
            <person name="Rogers J."/>
            <person name="Rutter S."/>
            <person name="Seeger K."/>
            <person name="Skelton S."/>
            <person name="Squares S."/>
            <person name="Squares R."/>
            <person name="Sulston J.E."/>
            <person name="Taylor K."/>
            <person name="Whitehead S."/>
            <person name="Barrell B.G."/>
        </authorList>
    </citation>
    <scope>NUCLEOTIDE SEQUENCE [LARGE SCALE GENOMIC DNA]</scope>
    <source>
        <strain>ATCC 25618 / H37Rv</strain>
    </source>
</reference>
<reference key="2">
    <citation type="journal article" date="2005" name="Nucleic Acids Res.">
        <title>Toxin-antitoxin loci are highly abundant in free-living but lost from host-associated prokaryotes.</title>
        <authorList>
            <person name="Pandey D.P."/>
            <person name="Gerdes K."/>
        </authorList>
    </citation>
    <scope>POSSIBLE FUNCTION</scope>
    <source>
        <strain>ATCC 25618 / H37Rv</strain>
    </source>
</reference>
<reference key="3">
    <citation type="journal article" date="2008" name="BMC Syst. Biol.">
        <title>targetTB: a target identification pipeline for Mycobacterium tuberculosis through an interactome, reactome and genome-scale structural analysis.</title>
        <authorList>
            <person name="Raman K."/>
            <person name="Yeturu K."/>
            <person name="Chandra N."/>
        </authorList>
    </citation>
    <scope>IDENTIFICATION AS A DRUG TARGET [LARGE SCALE ANALYSIS]</scope>
</reference>
<reference key="4">
    <citation type="journal article" date="2011" name="Mol. Cell. Proteomics">
        <title>Proteogenomic analysis of Mycobacterium tuberculosis by high resolution mass spectrometry.</title>
        <authorList>
            <person name="Kelkar D.S."/>
            <person name="Kumar D."/>
            <person name="Kumar P."/>
            <person name="Balakrishnan L."/>
            <person name="Muthusamy B."/>
            <person name="Yadav A.K."/>
            <person name="Shrivastava P."/>
            <person name="Marimuthu A."/>
            <person name="Anand S."/>
            <person name="Sundaram H."/>
            <person name="Kingsbury R."/>
            <person name="Harsha H.C."/>
            <person name="Nair B."/>
            <person name="Prasad T.S."/>
            <person name="Chauhan D.S."/>
            <person name="Katoch K."/>
            <person name="Katoch V.M."/>
            <person name="Kumar P."/>
            <person name="Chaerkady R."/>
            <person name="Ramachandran S."/>
            <person name="Dash D."/>
            <person name="Pandey A."/>
        </authorList>
    </citation>
    <scope>IDENTIFICATION BY MASS SPECTROMETRY [LARGE SCALE ANALYSIS]</scope>
    <source>
        <strain>ATCC 25618 / H37Rv</strain>
    </source>
</reference>
<reference key="5">
    <citation type="journal article" date="2013" name="Mol. Cell. Proteomics">
        <title>Proteomic profiling of Mycobacterium tuberculosis identifies nutrient-starvation-responsive toxin-antitoxin systems.</title>
        <authorList>
            <person name="Albrethsen J."/>
            <person name="Agner J."/>
            <person name="Piersma S.R."/>
            <person name="Hoejrup P."/>
            <person name="Pham T.V."/>
            <person name="Weldingh K."/>
            <person name="Jimenez C.R."/>
            <person name="Andersen P."/>
            <person name="Rosenkrands I."/>
        </authorList>
    </citation>
    <scope>IDENTIFICATION BY MASS SPECTROMETRY</scope>
    <scope>SUBCELLULAR LOCATION</scope>
    <source>
        <strain>ATCC 27294 / TMC 102 / H37Rv</strain>
    </source>
</reference>
<reference key="6">
    <citation type="journal article" date="2015" name="J. Bacteriol.">
        <title>Structure-function analysis of VapB4 antitoxin identifies critical features of a minimal VapC4 toxin-binding module.</title>
        <authorList>
            <person name="Jin G."/>
            <person name="Pavelka M.S. Jr."/>
            <person name="Butler J.S."/>
        </authorList>
    </citation>
    <scope>FUNCTION</scope>
    <source>
        <strain>H37Rv</strain>
    </source>
</reference>
<reference key="7">
    <citation type="journal article" date="2009" name="J. Biol. Chem.">
        <title>Structure and proposed activity of a member of the VapBC family of toxin-antitoxin systems. VapBC-5 from Mycobacterium tuberculosis.</title>
        <authorList>
            <person name="Miallau L."/>
            <person name="Faller M."/>
            <person name="Chiang J."/>
            <person name="Arbing M."/>
            <person name="Guo F."/>
            <person name="Cascio D."/>
            <person name="Eisenberg D."/>
        </authorList>
    </citation>
    <scope>X-RAY CRYSTALLOGRAPHY (1.76 ANGSTROMS) OF 2-135 IN COMPLEX WITH VAPB5</scope>
    <scope>FUNCTION AS AN RNASE</scope>
    <scope>SUBUNIT</scope>
    <scope>COFACTOR</scope>
    <source>
        <strain>ATCC 25618 / H37Rv</strain>
    </source>
</reference>
<accession>P96917</accession>
<accession>L0T741</accession>
<feature type="chain" id="PRO_0000407868" description="Ribonuclease VapC5">
    <location>
        <begin position="1"/>
        <end position="135"/>
    </location>
</feature>
<feature type="domain" description="PINc" evidence="1">
    <location>
        <begin position="9"/>
        <end position="130"/>
    </location>
</feature>
<feature type="binding site" evidence="1">
    <location>
        <position position="11"/>
    </location>
    <ligand>
        <name>Mg(2+)</name>
        <dbReference type="ChEBI" id="CHEBI:18420"/>
    </ligand>
</feature>
<feature type="binding site" evidence="1">
    <location>
        <position position="100"/>
    </location>
    <ligand>
        <name>Mg(2+)</name>
        <dbReference type="ChEBI" id="CHEBI:18420"/>
    </ligand>
</feature>
<feature type="strand" evidence="4">
    <location>
        <begin position="7"/>
        <end position="10"/>
    </location>
</feature>
<feature type="helix" evidence="4">
    <location>
        <begin position="13"/>
        <end position="15"/>
    </location>
</feature>
<feature type="helix" evidence="4">
    <location>
        <begin position="26"/>
        <end position="28"/>
    </location>
</feature>
<feature type="strand" evidence="4">
    <location>
        <begin position="31"/>
        <end position="36"/>
    </location>
</feature>
<feature type="helix" evidence="4">
    <location>
        <begin position="37"/>
        <end position="49"/>
    </location>
</feature>
<feature type="helix" evidence="4">
    <location>
        <begin position="53"/>
        <end position="64"/>
    </location>
</feature>
<feature type="turn" evidence="4">
    <location>
        <begin position="65"/>
        <end position="68"/>
    </location>
</feature>
<feature type="helix" evidence="4">
    <location>
        <begin position="76"/>
        <end position="92"/>
    </location>
</feature>
<feature type="helix" evidence="4">
    <location>
        <begin position="98"/>
        <end position="109"/>
    </location>
</feature>
<feature type="strand" evidence="4">
    <location>
        <begin position="114"/>
        <end position="120"/>
    </location>
</feature>
<feature type="helix" evidence="4">
    <location>
        <begin position="121"/>
        <end position="124"/>
    </location>
</feature>
<feature type="strand" evidence="4">
    <location>
        <begin position="132"/>
        <end position="134"/>
    </location>
</feature>
<gene>
    <name evidence="1" type="primary">vapC5</name>
    <name type="ordered locus">Rv0627</name>
</gene>
<sequence length="135" mass="14408">MSTTPAAGVLDTSVFIATESGRQLDEALIPDRVATTVVTLAELRVGVLAAATTDIRAQRLATLESVADMETLPVDDDAARMWARLRIHLAESGRRVRINDLWIAAVAASRALPVITQDDDFAALDGAASVEIIRV</sequence>
<proteinExistence type="evidence at protein level"/>
<organism>
    <name type="scientific">Mycobacterium tuberculosis (strain ATCC 25618 / H37Rv)</name>
    <dbReference type="NCBI Taxonomy" id="83332"/>
    <lineage>
        <taxon>Bacteria</taxon>
        <taxon>Bacillati</taxon>
        <taxon>Actinomycetota</taxon>
        <taxon>Actinomycetes</taxon>
        <taxon>Mycobacteriales</taxon>
        <taxon>Mycobacteriaceae</taxon>
        <taxon>Mycobacterium</taxon>
        <taxon>Mycobacterium tuberculosis complex</taxon>
    </lineage>
</organism>
<dbReference type="EC" id="3.1.-.-" evidence="1"/>
<dbReference type="EMBL" id="AL123456">
    <property type="protein sequence ID" value="CCP43368.1"/>
    <property type="molecule type" value="Genomic_DNA"/>
</dbReference>
<dbReference type="PIR" id="H70611">
    <property type="entry name" value="H70611"/>
</dbReference>
<dbReference type="RefSeq" id="NP_215141.1">
    <property type="nucleotide sequence ID" value="NC_000962.3"/>
</dbReference>
<dbReference type="RefSeq" id="WP_003403246.1">
    <property type="nucleotide sequence ID" value="NZ_NVQJ01000033.1"/>
</dbReference>
<dbReference type="PDB" id="3DBO">
    <property type="method" value="X-ray"/>
    <property type="resolution" value="1.76 A"/>
    <property type="chains" value="B=2-135"/>
</dbReference>
<dbReference type="PDBsum" id="3DBO"/>
<dbReference type="SMR" id="P96917"/>
<dbReference type="STRING" id="83332.Rv0627"/>
<dbReference type="PaxDb" id="83332-Rv0627"/>
<dbReference type="DNASU" id="887991"/>
<dbReference type="GeneID" id="887991"/>
<dbReference type="KEGG" id="mtu:Rv0627"/>
<dbReference type="KEGG" id="mtv:RVBD_0627"/>
<dbReference type="TubercuList" id="Rv0627"/>
<dbReference type="eggNOG" id="COG1487">
    <property type="taxonomic scope" value="Bacteria"/>
</dbReference>
<dbReference type="InParanoid" id="P96917"/>
<dbReference type="OrthoDB" id="9799448at2"/>
<dbReference type="PhylomeDB" id="P96917"/>
<dbReference type="EvolutionaryTrace" id="P96917"/>
<dbReference type="Proteomes" id="UP000001584">
    <property type="component" value="Chromosome"/>
</dbReference>
<dbReference type="GO" id="GO:0005576">
    <property type="term" value="C:extracellular region"/>
    <property type="evidence" value="ECO:0007669"/>
    <property type="project" value="UniProtKB-SubCell"/>
</dbReference>
<dbReference type="GO" id="GO:0000287">
    <property type="term" value="F:magnesium ion binding"/>
    <property type="evidence" value="ECO:0000314"/>
    <property type="project" value="MTBBASE"/>
</dbReference>
<dbReference type="GO" id="GO:0004521">
    <property type="term" value="F:RNA endonuclease activity"/>
    <property type="evidence" value="ECO:0000314"/>
    <property type="project" value="MTBBASE"/>
</dbReference>
<dbReference type="CDD" id="cd18768">
    <property type="entry name" value="PIN_MtVapC4-C5-like"/>
    <property type="match status" value="1"/>
</dbReference>
<dbReference type="FunFam" id="3.40.50.1010:FF:000082">
    <property type="entry name" value="Ribonuclease VapC"/>
    <property type="match status" value="1"/>
</dbReference>
<dbReference type="Gene3D" id="3.40.50.1010">
    <property type="entry name" value="5'-nuclease"/>
    <property type="match status" value="1"/>
</dbReference>
<dbReference type="HAMAP" id="MF_00265">
    <property type="entry name" value="VapC_Nob1"/>
    <property type="match status" value="1"/>
</dbReference>
<dbReference type="InterPro" id="IPR029060">
    <property type="entry name" value="PIN-like_dom_sf"/>
</dbReference>
<dbReference type="InterPro" id="IPR002716">
    <property type="entry name" value="PIN_dom"/>
</dbReference>
<dbReference type="InterPro" id="IPR050556">
    <property type="entry name" value="Type_II_TA_system_RNase"/>
</dbReference>
<dbReference type="InterPro" id="IPR022907">
    <property type="entry name" value="VapC_family"/>
</dbReference>
<dbReference type="PANTHER" id="PTHR33653">
    <property type="entry name" value="RIBONUCLEASE VAPC2"/>
    <property type="match status" value="1"/>
</dbReference>
<dbReference type="PANTHER" id="PTHR33653:SF1">
    <property type="entry name" value="RIBONUCLEASE VAPC2"/>
    <property type="match status" value="1"/>
</dbReference>
<dbReference type="Pfam" id="PF01850">
    <property type="entry name" value="PIN"/>
    <property type="match status" value="1"/>
</dbReference>
<dbReference type="SUPFAM" id="SSF88723">
    <property type="entry name" value="PIN domain-like"/>
    <property type="match status" value="1"/>
</dbReference>